<organism>
    <name type="scientific">Novosphingobium aromaticivorans (strain ATCC 700278 / DSM 12444 / CCUG 56034 / CIP 105152 / NBRC 16084 / F199)</name>
    <dbReference type="NCBI Taxonomy" id="279238"/>
    <lineage>
        <taxon>Bacteria</taxon>
        <taxon>Pseudomonadati</taxon>
        <taxon>Pseudomonadota</taxon>
        <taxon>Alphaproteobacteria</taxon>
        <taxon>Sphingomonadales</taxon>
        <taxon>Sphingomonadaceae</taxon>
        <taxon>Novosphingobium</taxon>
    </lineage>
</organism>
<comment type="catalytic activity">
    <reaction evidence="1">
        <text>2-formamido-N(1)-(5-O-phospho-beta-D-ribosyl)acetamidine + ATP = 5-amino-1-(5-phospho-beta-D-ribosyl)imidazole + ADP + phosphate + H(+)</text>
        <dbReference type="Rhea" id="RHEA:23032"/>
        <dbReference type="ChEBI" id="CHEBI:15378"/>
        <dbReference type="ChEBI" id="CHEBI:30616"/>
        <dbReference type="ChEBI" id="CHEBI:43474"/>
        <dbReference type="ChEBI" id="CHEBI:137981"/>
        <dbReference type="ChEBI" id="CHEBI:147287"/>
        <dbReference type="ChEBI" id="CHEBI:456216"/>
        <dbReference type="EC" id="6.3.3.1"/>
    </reaction>
</comment>
<comment type="pathway">
    <text evidence="1">Purine metabolism; IMP biosynthesis via de novo pathway; 5-amino-1-(5-phospho-D-ribosyl)imidazole from N(2)-formyl-N(1)-(5-phospho-D-ribosyl)glycinamide: step 2/2.</text>
</comment>
<comment type="subcellular location">
    <subcellularLocation>
        <location evidence="1">Cytoplasm</location>
    </subcellularLocation>
</comment>
<comment type="similarity">
    <text evidence="1">Belongs to the AIR synthase family.</text>
</comment>
<evidence type="ECO:0000255" key="1">
    <source>
        <dbReference type="HAMAP-Rule" id="MF_00741"/>
    </source>
</evidence>
<dbReference type="EC" id="6.3.3.1" evidence="1"/>
<dbReference type="EMBL" id="CP000248">
    <property type="protein sequence ID" value="ABD25344.1"/>
    <property type="molecule type" value="Genomic_DNA"/>
</dbReference>
<dbReference type="RefSeq" id="WP_011444558.1">
    <property type="nucleotide sequence ID" value="NC_007794.1"/>
</dbReference>
<dbReference type="SMR" id="Q2G9X9"/>
<dbReference type="STRING" id="279238.Saro_0899"/>
<dbReference type="KEGG" id="nar:Saro_0899"/>
<dbReference type="eggNOG" id="COG0150">
    <property type="taxonomic scope" value="Bacteria"/>
</dbReference>
<dbReference type="HOGENOM" id="CLU_047116_0_0_5"/>
<dbReference type="UniPathway" id="UPA00074">
    <property type="reaction ID" value="UER00129"/>
</dbReference>
<dbReference type="Proteomes" id="UP000009134">
    <property type="component" value="Chromosome"/>
</dbReference>
<dbReference type="GO" id="GO:0005829">
    <property type="term" value="C:cytosol"/>
    <property type="evidence" value="ECO:0007669"/>
    <property type="project" value="TreeGrafter"/>
</dbReference>
<dbReference type="GO" id="GO:0005524">
    <property type="term" value="F:ATP binding"/>
    <property type="evidence" value="ECO:0007669"/>
    <property type="project" value="UniProtKB-KW"/>
</dbReference>
<dbReference type="GO" id="GO:0004637">
    <property type="term" value="F:phosphoribosylamine-glycine ligase activity"/>
    <property type="evidence" value="ECO:0007669"/>
    <property type="project" value="TreeGrafter"/>
</dbReference>
<dbReference type="GO" id="GO:0004641">
    <property type="term" value="F:phosphoribosylformylglycinamidine cyclo-ligase activity"/>
    <property type="evidence" value="ECO:0007669"/>
    <property type="project" value="UniProtKB-UniRule"/>
</dbReference>
<dbReference type="GO" id="GO:0006189">
    <property type="term" value="P:'de novo' IMP biosynthetic process"/>
    <property type="evidence" value="ECO:0007669"/>
    <property type="project" value="UniProtKB-UniRule"/>
</dbReference>
<dbReference type="GO" id="GO:0046084">
    <property type="term" value="P:adenine biosynthetic process"/>
    <property type="evidence" value="ECO:0007669"/>
    <property type="project" value="TreeGrafter"/>
</dbReference>
<dbReference type="CDD" id="cd02196">
    <property type="entry name" value="PurM"/>
    <property type="match status" value="1"/>
</dbReference>
<dbReference type="FunFam" id="3.30.1330.10:FF:000001">
    <property type="entry name" value="Phosphoribosylformylglycinamidine cyclo-ligase"/>
    <property type="match status" value="1"/>
</dbReference>
<dbReference type="FunFam" id="3.90.650.10:FF:000011">
    <property type="entry name" value="Phosphoribosylformylglycinamidine cyclo-ligase"/>
    <property type="match status" value="1"/>
</dbReference>
<dbReference type="Gene3D" id="3.90.650.10">
    <property type="entry name" value="PurM-like C-terminal domain"/>
    <property type="match status" value="1"/>
</dbReference>
<dbReference type="Gene3D" id="3.30.1330.10">
    <property type="entry name" value="PurM-like, N-terminal domain"/>
    <property type="match status" value="1"/>
</dbReference>
<dbReference type="HAMAP" id="MF_00741">
    <property type="entry name" value="AIRS"/>
    <property type="match status" value="1"/>
</dbReference>
<dbReference type="InterPro" id="IPR010918">
    <property type="entry name" value="PurM-like_C_dom"/>
</dbReference>
<dbReference type="InterPro" id="IPR036676">
    <property type="entry name" value="PurM-like_C_sf"/>
</dbReference>
<dbReference type="InterPro" id="IPR016188">
    <property type="entry name" value="PurM-like_N"/>
</dbReference>
<dbReference type="InterPro" id="IPR036921">
    <property type="entry name" value="PurM-like_N_sf"/>
</dbReference>
<dbReference type="InterPro" id="IPR004733">
    <property type="entry name" value="PurM_cligase"/>
</dbReference>
<dbReference type="NCBIfam" id="TIGR00878">
    <property type="entry name" value="purM"/>
    <property type="match status" value="1"/>
</dbReference>
<dbReference type="PANTHER" id="PTHR10520:SF12">
    <property type="entry name" value="TRIFUNCTIONAL PURINE BIOSYNTHETIC PROTEIN ADENOSINE-3"/>
    <property type="match status" value="1"/>
</dbReference>
<dbReference type="PANTHER" id="PTHR10520">
    <property type="entry name" value="TRIFUNCTIONAL PURINE BIOSYNTHETIC PROTEIN ADENOSINE-3-RELATED"/>
    <property type="match status" value="1"/>
</dbReference>
<dbReference type="Pfam" id="PF00586">
    <property type="entry name" value="AIRS"/>
    <property type="match status" value="1"/>
</dbReference>
<dbReference type="Pfam" id="PF02769">
    <property type="entry name" value="AIRS_C"/>
    <property type="match status" value="1"/>
</dbReference>
<dbReference type="SUPFAM" id="SSF56042">
    <property type="entry name" value="PurM C-terminal domain-like"/>
    <property type="match status" value="1"/>
</dbReference>
<dbReference type="SUPFAM" id="SSF55326">
    <property type="entry name" value="PurM N-terminal domain-like"/>
    <property type="match status" value="1"/>
</dbReference>
<keyword id="KW-0067">ATP-binding</keyword>
<keyword id="KW-0963">Cytoplasm</keyword>
<keyword id="KW-0436">Ligase</keyword>
<keyword id="KW-0547">Nucleotide-binding</keyword>
<keyword id="KW-0658">Purine biosynthesis</keyword>
<keyword id="KW-1185">Reference proteome</keyword>
<gene>
    <name evidence="1" type="primary">purM</name>
    <name type="ordered locus">Saro_0899</name>
</gene>
<reference key="1">
    <citation type="submission" date="2006-01" db="EMBL/GenBank/DDBJ databases">
        <title>Complete sequence of Novosphingobium aromaticivorans DSM 12444.</title>
        <authorList>
            <consortium name="US DOE Joint Genome Institute"/>
            <person name="Copeland A."/>
            <person name="Lucas S."/>
            <person name="Lapidus A."/>
            <person name="Barry K."/>
            <person name="Detter J.C."/>
            <person name="Glavina T."/>
            <person name="Hammon N."/>
            <person name="Israni S."/>
            <person name="Pitluck S."/>
            <person name="Chain P."/>
            <person name="Malfatti S."/>
            <person name="Shin M."/>
            <person name="Vergez L."/>
            <person name="Schmutz J."/>
            <person name="Larimer F."/>
            <person name="Land M."/>
            <person name="Kyrpides N."/>
            <person name="Ivanova N."/>
            <person name="Fredrickson J."/>
            <person name="Balkwill D."/>
            <person name="Romine M.F."/>
            <person name="Richardson P."/>
        </authorList>
    </citation>
    <scope>NUCLEOTIDE SEQUENCE [LARGE SCALE GENOMIC DNA]</scope>
    <source>
        <strain>ATCC 700278 / DSM 12444 / CCUG 56034 / CIP 105152 / NBRC 16084 / F199</strain>
    </source>
</reference>
<feature type="chain" id="PRO_0000258376" description="Phosphoribosylformylglycinamidine cyclo-ligase">
    <location>
        <begin position="1"/>
        <end position="368"/>
    </location>
</feature>
<name>PUR5_NOVAD</name>
<proteinExistence type="inferred from homology"/>
<accession>Q2G9X9</accession>
<sequence>MSDEQNKPESYSYAKAGVNIAAGNALVKAIGPLAKSTARPGADAELGGFGGFFDLKAAGYNDPLLVAGNDGVGTKVKLAIDHDRHDQIGIDLVAMCVNDLIVQGAEPLFFLDYFATGRLDNGVAERVVAGIADGCKLAGCALIGGETAEMPGMYADGDYDLAGFCVGAVERGEQLTGDRVAEGDVLLGLASSGVHSNGYSLVRRLAADKGWKLDRPALFDNERLLIDYLIEPTRIYVKSLLPFIRSGRINALAHITGGGLLENVPRVLPRGLHARIDADSWEQSRLMAFLQAQGNIEPEEMARTFNCGIGMILAVNPAQADALAADLAAAGETVYRVGTIVKGEKGCTVTGSAETWSARSAWEATHIG</sequence>
<protein>
    <recommendedName>
        <fullName evidence="1">Phosphoribosylformylglycinamidine cyclo-ligase</fullName>
        <ecNumber evidence="1">6.3.3.1</ecNumber>
    </recommendedName>
    <alternativeName>
        <fullName evidence="1">AIR synthase</fullName>
    </alternativeName>
    <alternativeName>
        <fullName evidence="1">AIRS</fullName>
    </alternativeName>
    <alternativeName>
        <fullName evidence="1">Phosphoribosyl-aminoimidazole synthetase</fullName>
    </alternativeName>
</protein>